<reference key="1">
    <citation type="journal article" date="1995" name="J. Biol. Chem.">
        <title>Characterization of the nicotinic acetylcholine receptor beta 3 gene. Its regulation within the avian nervous system is effected by a promoter 143 base pairs in length.</title>
        <authorList>
            <person name="Hernandez M.C."/>
            <person name="Erkman L."/>
            <person name="Matter-Sadzinski L."/>
            <person name="Roztocil T."/>
            <person name="Ballivet M."/>
            <person name="Matter J.-M."/>
        </authorList>
    </citation>
    <scope>NUCLEOTIDE SEQUENCE [MRNA]</scope>
    <source>
        <strain>White leghorn</strain>
    </source>
</reference>
<reference key="2">
    <citation type="submission" date="1999-10" db="EMBL/GenBank/DDBJ databases">
        <authorList>
            <person name="Ballivet M."/>
        </authorList>
    </citation>
    <scope>SEQUENCE REVISION TO 331</scope>
</reference>
<organism>
    <name type="scientific">Gallus gallus</name>
    <name type="common">Chicken</name>
    <dbReference type="NCBI Taxonomy" id="9031"/>
    <lineage>
        <taxon>Eukaryota</taxon>
        <taxon>Metazoa</taxon>
        <taxon>Chordata</taxon>
        <taxon>Craniata</taxon>
        <taxon>Vertebrata</taxon>
        <taxon>Euteleostomi</taxon>
        <taxon>Archelosauria</taxon>
        <taxon>Archosauria</taxon>
        <taxon>Dinosauria</taxon>
        <taxon>Saurischia</taxon>
        <taxon>Theropoda</taxon>
        <taxon>Coelurosauria</taxon>
        <taxon>Aves</taxon>
        <taxon>Neognathae</taxon>
        <taxon>Galloanserae</taxon>
        <taxon>Galliformes</taxon>
        <taxon>Phasianidae</taxon>
        <taxon>Phasianinae</taxon>
        <taxon>Gallus</taxon>
    </lineage>
</organism>
<protein>
    <recommendedName>
        <fullName>Neuronal acetylcholine receptor subunit beta-3</fullName>
    </recommendedName>
</protein>
<accession>P43679</accession>
<dbReference type="EMBL" id="X83739">
    <property type="protein sequence ID" value="CAB59814.1"/>
    <property type="molecule type" value="mRNA"/>
</dbReference>
<dbReference type="PIR" id="A55972">
    <property type="entry name" value="A55972"/>
</dbReference>
<dbReference type="SMR" id="P43679"/>
<dbReference type="ComplexPortal" id="CPX-201">
    <property type="entry name" value="Neuronal nicotinic acetylcholine receptor complex, alpha3-alpha6-beta2-beta3"/>
</dbReference>
<dbReference type="FunCoup" id="P43679">
    <property type="interactions" value="206"/>
</dbReference>
<dbReference type="STRING" id="9031.ENSGALP00000024774"/>
<dbReference type="GlyCosmos" id="P43679">
    <property type="glycosylation" value="2 sites, No reported glycans"/>
</dbReference>
<dbReference type="GlyGen" id="P43679">
    <property type="glycosylation" value="2 sites"/>
</dbReference>
<dbReference type="PaxDb" id="9031-ENSGALP00000024774"/>
<dbReference type="VEuPathDB" id="HostDB:geneid_395604"/>
<dbReference type="eggNOG" id="KOG3645">
    <property type="taxonomic scope" value="Eukaryota"/>
</dbReference>
<dbReference type="InParanoid" id="P43679"/>
<dbReference type="OrthoDB" id="5975154at2759"/>
<dbReference type="PhylomeDB" id="P43679"/>
<dbReference type="Proteomes" id="UP000000539">
    <property type="component" value="Unassembled WGS sequence"/>
</dbReference>
<dbReference type="GO" id="GO:0005892">
    <property type="term" value="C:acetylcholine-gated channel complex"/>
    <property type="evidence" value="ECO:0000318"/>
    <property type="project" value="GO_Central"/>
</dbReference>
<dbReference type="GO" id="GO:0043005">
    <property type="term" value="C:neuron projection"/>
    <property type="evidence" value="ECO:0000318"/>
    <property type="project" value="GO_Central"/>
</dbReference>
<dbReference type="GO" id="GO:0005886">
    <property type="term" value="C:plasma membrane"/>
    <property type="evidence" value="ECO:0000318"/>
    <property type="project" value="GO_Central"/>
</dbReference>
<dbReference type="GO" id="GO:0045211">
    <property type="term" value="C:postsynaptic membrane"/>
    <property type="evidence" value="ECO:0007669"/>
    <property type="project" value="UniProtKB-KW"/>
</dbReference>
<dbReference type="GO" id="GO:0045202">
    <property type="term" value="C:synapse"/>
    <property type="evidence" value="ECO:0000318"/>
    <property type="project" value="GO_Central"/>
</dbReference>
<dbReference type="GO" id="GO:0022848">
    <property type="term" value="F:acetylcholine-gated monoatomic cation-selective channel activity"/>
    <property type="evidence" value="ECO:0000318"/>
    <property type="project" value="GO_Central"/>
</dbReference>
<dbReference type="GO" id="GO:0004888">
    <property type="term" value="F:transmembrane signaling receptor activity"/>
    <property type="evidence" value="ECO:0007669"/>
    <property type="project" value="InterPro"/>
</dbReference>
<dbReference type="GO" id="GO:0095500">
    <property type="term" value="P:acetylcholine receptor signaling pathway"/>
    <property type="evidence" value="ECO:0000318"/>
    <property type="project" value="GO_Central"/>
</dbReference>
<dbReference type="GO" id="GO:0051899">
    <property type="term" value="P:membrane depolarization"/>
    <property type="evidence" value="ECO:0000318"/>
    <property type="project" value="GO_Central"/>
</dbReference>
<dbReference type="GO" id="GO:0034220">
    <property type="term" value="P:monoatomic ion transmembrane transport"/>
    <property type="evidence" value="ECO:0000318"/>
    <property type="project" value="GO_Central"/>
</dbReference>
<dbReference type="GO" id="GO:0007274">
    <property type="term" value="P:neuromuscular synaptic transmission"/>
    <property type="evidence" value="ECO:0000318"/>
    <property type="project" value="GO_Central"/>
</dbReference>
<dbReference type="GO" id="GO:0035094">
    <property type="term" value="P:response to nicotine"/>
    <property type="evidence" value="ECO:0000318"/>
    <property type="project" value="GO_Central"/>
</dbReference>
<dbReference type="GO" id="GO:0007271">
    <property type="term" value="P:synaptic transmission, cholinergic"/>
    <property type="evidence" value="ECO:0000318"/>
    <property type="project" value="GO_Central"/>
</dbReference>
<dbReference type="CDD" id="cd19026">
    <property type="entry name" value="LGIC_ECD_nAChR_B3"/>
    <property type="match status" value="1"/>
</dbReference>
<dbReference type="CDD" id="cd19064">
    <property type="entry name" value="LGIC_TM_nAChR"/>
    <property type="match status" value="1"/>
</dbReference>
<dbReference type="FunFam" id="1.20.58.390:FF:000025">
    <property type="entry name" value="Cholinergic receptor nicotinic beta 3 subunit"/>
    <property type="match status" value="1"/>
</dbReference>
<dbReference type="FunFam" id="2.70.170.10:FF:000005">
    <property type="entry name" value="Neuronal nicotinic acetylcholine receptor alpha4 subunit"/>
    <property type="match status" value="1"/>
</dbReference>
<dbReference type="FunFam" id="1.20.58.390:FF:000001">
    <property type="entry name" value="Neuronal nicotinic acetylcholine receptor subunit 3"/>
    <property type="match status" value="1"/>
</dbReference>
<dbReference type="Gene3D" id="2.70.170.10">
    <property type="entry name" value="Neurotransmitter-gated ion-channel ligand-binding domain"/>
    <property type="match status" value="1"/>
</dbReference>
<dbReference type="Gene3D" id="1.20.58.390">
    <property type="entry name" value="Neurotransmitter-gated ion-channel transmembrane domain"/>
    <property type="match status" value="2"/>
</dbReference>
<dbReference type="InterPro" id="IPR006202">
    <property type="entry name" value="Neur_chan_lig-bd"/>
</dbReference>
<dbReference type="InterPro" id="IPR036734">
    <property type="entry name" value="Neur_chan_lig-bd_sf"/>
</dbReference>
<dbReference type="InterPro" id="IPR006201">
    <property type="entry name" value="Neur_channel"/>
</dbReference>
<dbReference type="InterPro" id="IPR036719">
    <property type="entry name" value="Neuro-gated_channel_TM_sf"/>
</dbReference>
<dbReference type="InterPro" id="IPR038050">
    <property type="entry name" value="Neuro_actylchol_rec"/>
</dbReference>
<dbReference type="InterPro" id="IPR006029">
    <property type="entry name" value="Neurotrans-gated_channel_TM"/>
</dbReference>
<dbReference type="InterPro" id="IPR018000">
    <property type="entry name" value="Neurotransmitter_ion_chnl_CS"/>
</dbReference>
<dbReference type="InterPro" id="IPR002394">
    <property type="entry name" value="Nicotinic_acetylcholine_rcpt"/>
</dbReference>
<dbReference type="NCBIfam" id="TIGR00860">
    <property type="entry name" value="LIC"/>
    <property type="match status" value="1"/>
</dbReference>
<dbReference type="PANTHER" id="PTHR18945">
    <property type="entry name" value="NEUROTRANSMITTER GATED ION CHANNEL"/>
    <property type="match status" value="1"/>
</dbReference>
<dbReference type="Pfam" id="PF02931">
    <property type="entry name" value="Neur_chan_LBD"/>
    <property type="match status" value="1"/>
</dbReference>
<dbReference type="Pfam" id="PF02932">
    <property type="entry name" value="Neur_chan_memb"/>
    <property type="match status" value="1"/>
</dbReference>
<dbReference type="PRINTS" id="PR00254">
    <property type="entry name" value="NICOTINICR"/>
</dbReference>
<dbReference type="PRINTS" id="PR00252">
    <property type="entry name" value="NRIONCHANNEL"/>
</dbReference>
<dbReference type="SUPFAM" id="SSF90112">
    <property type="entry name" value="Neurotransmitter-gated ion-channel transmembrane pore"/>
    <property type="match status" value="1"/>
</dbReference>
<dbReference type="SUPFAM" id="SSF63712">
    <property type="entry name" value="Nicotinic receptor ligand binding domain-like"/>
    <property type="match status" value="1"/>
</dbReference>
<dbReference type="PROSITE" id="PS00236">
    <property type="entry name" value="NEUROTR_ION_CHANNEL"/>
    <property type="match status" value="1"/>
</dbReference>
<gene>
    <name type="primary">CHRNB3</name>
</gene>
<comment type="function">
    <text evidence="3">Component of neuronal acetylcholine receptors (nAChRs) that function as pentameric, ligand-gated cation channels with high calcium permeability among other activities. nAChRs are excitatory neurotrasnmitter receptors formed by a collection of nAChR subunits known to mediate synaptic transmission in the nervous system and the neuromuscular junction. Each nAchR subunit confers differential attributes to channel properties, including activation, deactivation and desensitization kinetics, pH sensitivity, cation permeability, and binding to allosteric modulators. Has an accessory rather than functional role and is only able to form functional nAChRs when co-assembled with another beta subunit. Participates in pentameric assemblies along with CHRNA3, CHRNA4, CHRNA6, CHRNB2 and CHRNB4. Modulates receptor assembly and increases receptor sensitivity to nicotine when associated with CHRNB2, CHRNA4 and/or CHRNA6 as well as CHRNA3 and CHRNB4. Seems to play a role in nicotine addiction.</text>
</comment>
<comment type="catalytic activity">
    <reaction evidence="2">
        <text>Ca(2+)(in) = Ca(2+)(out)</text>
        <dbReference type="Rhea" id="RHEA:29671"/>
        <dbReference type="ChEBI" id="CHEBI:29108"/>
    </reaction>
</comment>
<comment type="catalytic activity">
    <reaction evidence="2">
        <text>K(+)(in) = K(+)(out)</text>
        <dbReference type="Rhea" id="RHEA:29463"/>
        <dbReference type="ChEBI" id="CHEBI:29103"/>
    </reaction>
</comment>
<comment type="catalytic activity">
    <reaction evidence="2">
        <text>Na(+)(in) = Na(+)(out)</text>
        <dbReference type="Rhea" id="RHEA:34963"/>
        <dbReference type="ChEBI" id="CHEBI:29101"/>
    </reaction>
</comment>
<comment type="activity regulation">
    <text evidence="3">Activated by a myriad of ligands such as acetylcholine, cytisine, nicotine, choline and epibatidine.</text>
</comment>
<comment type="subunit">
    <text evidence="3">Neuronal AChR seems to be composed of two different type of subunits: alpha and beta. CHRNB3/beta-3 subunit is only able to form functional nAChRs when co-assembled with another beta subunit. Participates in pentameric assemblies along with CHRNA4/alpha-4 and CHRNB2/beta-2 subunits and with CHRNA6/alpha-6 as well, forming stoichiometries such as (CHRNA3:CHRNB4)2:CHRNB3, (CHRNA4:CHRNB2)2:CHRNB3 or (CHRNA6:CHRNB2)2:CHRNB3.</text>
</comment>
<comment type="subcellular location">
    <subcellularLocation>
        <location evidence="1">Synaptic cell membrane</location>
        <topology evidence="4">Multi-pass membrane protein</topology>
    </subcellularLocation>
    <subcellularLocation>
        <location evidence="1">Cell membrane</location>
        <topology evidence="4">Multi-pass membrane protein</topology>
    </subcellularLocation>
</comment>
<comment type="tissue specificity">
    <text>Relatively abundant in the developing retina and in the trigeminal ganglion.</text>
</comment>
<comment type="similarity">
    <text evidence="5">Belongs to the ligand-gated ion channel (TC 1.A.9) family. Acetylcholine receptor (TC 1.A.9.1) subfamily. Beta-3/CHRNB3 sub-subfamily.</text>
</comment>
<name>ACHB3_CHICK</name>
<keyword id="KW-1003">Cell membrane</keyword>
<keyword id="KW-1015">Disulfide bond</keyword>
<keyword id="KW-0325">Glycoprotein</keyword>
<keyword id="KW-0407">Ion channel</keyword>
<keyword id="KW-0406">Ion transport</keyword>
<keyword id="KW-1071">Ligand-gated ion channel</keyword>
<keyword id="KW-0472">Membrane</keyword>
<keyword id="KW-0675">Receptor</keyword>
<keyword id="KW-1185">Reference proteome</keyword>
<keyword id="KW-0732">Signal</keyword>
<keyword id="KW-0770">Synapse</keyword>
<keyword id="KW-0812">Transmembrane</keyword>
<keyword id="KW-1133">Transmembrane helix</keyword>
<keyword id="KW-0813">Transport</keyword>
<feature type="signal peptide" evidence="4">
    <location>
        <begin position="1"/>
        <end position="20"/>
    </location>
</feature>
<feature type="chain" id="PRO_0000000387" description="Neuronal acetylcholine receptor subunit beta-3">
    <location>
        <begin position="21"/>
        <end position="455"/>
    </location>
</feature>
<feature type="topological domain" description="Extracellular" evidence="4">
    <location>
        <begin position="21"/>
        <end position="229"/>
    </location>
</feature>
<feature type="transmembrane region" description="Helical" evidence="4">
    <location>
        <begin position="230"/>
        <end position="254"/>
    </location>
</feature>
<feature type="transmembrane region" description="Helical" evidence="4">
    <location>
        <begin position="262"/>
        <end position="279"/>
    </location>
</feature>
<feature type="transmembrane region" description="Helical" evidence="4">
    <location>
        <begin position="296"/>
        <end position="317"/>
    </location>
</feature>
<feature type="topological domain" description="Cytoplasmic" evidence="4">
    <location>
        <begin position="318"/>
        <end position="425"/>
    </location>
</feature>
<feature type="transmembrane region" description="Helical" evidence="4">
    <location>
        <begin position="426"/>
        <end position="444"/>
    </location>
</feature>
<feature type="glycosylation site" description="N-linked (GlcNAc...) asparagine" evidence="4">
    <location>
        <position position="48"/>
    </location>
</feature>
<feature type="glycosylation site" description="N-linked (GlcNAc...) asparagine" evidence="4">
    <location>
        <position position="163"/>
    </location>
</feature>
<feature type="disulfide bond" evidence="3">
    <location>
        <begin position="150"/>
        <end position="164"/>
    </location>
</feature>
<evidence type="ECO:0000250" key="1">
    <source>
        <dbReference type="UniProtKB" id="O70174"/>
    </source>
</evidence>
<evidence type="ECO:0000250" key="2">
    <source>
        <dbReference type="UniProtKB" id="P04758"/>
    </source>
</evidence>
<evidence type="ECO:0000250" key="3">
    <source>
        <dbReference type="UniProtKB" id="Q05901"/>
    </source>
</evidence>
<evidence type="ECO:0000255" key="4"/>
<evidence type="ECO:0000305" key="5"/>
<sequence length="455" mass="52276">MLCLMLCVLCWSRSDVAALGSVVENEDALLRHLFQGYQKWVRPVENSNDTIKVLFGLKISQLVDVDEKNQLMTTNVWLKQEWMDHKLSWNPEEYGGITAIRVPSESLWLPDIVLFENADGRFEGSLMTKAIVKYNGVVQWMPPASYKSSCTMELTFFPFDRQNCSMKFGSWTYDGSMVDLILVDENVDTKDFFDNGEWEILNAKGMKGNRKDGLYSYPFVTYSFVLRRLPLFYTLFLIIPCLGLSFLTVLVFYLPSDEGEKLSLSTSVLVSLTVFLLVIEEIIPSSSKVIPLIGEYLLFIMIFVTLSIIVTVFVINVHHRSSATYHPMAPWVKRLFLQKLPRLLCMKGHVDRYSFSDTEEKETTLKSKLPGKQKHKQAKDGEKVVIAFLEKAADSIRYISRHVKKDAFIRQVVQDWKFVAQVLDRIFLWLFLVVSVTGSVLIFTPALQMWLNSTL</sequence>
<proteinExistence type="evidence at transcript level"/>